<accession>B9LS42</accession>
<evidence type="ECO:0000255" key="1">
    <source>
        <dbReference type="HAMAP-Rule" id="MF_00310"/>
    </source>
</evidence>
<dbReference type="EMBL" id="CP001365">
    <property type="protein sequence ID" value="ACM55887.1"/>
    <property type="molecule type" value="Genomic_DNA"/>
</dbReference>
<dbReference type="RefSeq" id="WP_012659528.1">
    <property type="nucleotide sequence ID" value="NC_012029.1"/>
</dbReference>
<dbReference type="SMR" id="B9LS42"/>
<dbReference type="GeneID" id="7401208"/>
<dbReference type="KEGG" id="hla:Hlac_0282"/>
<dbReference type="eggNOG" id="arCOG00865">
    <property type="taxonomic scope" value="Archaea"/>
</dbReference>
<dbReference type="HOGENOM" id="CLU_022916_0_0_2"/>
<dbReference type="Proteomes" id="UP000000740">
    <property type="component" value="Chromosome 1"/>
</dbReference>
<dbReference type="GO" id="GO:0005886">
    <property type="term" value="C:plasma membrane"/>
    <property type="evidence" value="ECO:0007669"/>
    <property type="project" value="UniProtKB-SubCell"/>
</dbReference>
<dbReference type="GO" id="GO:0005524">
    <property type="term" value="F:ATP binding"/>
    <property type="evidence" value="ECO:0007669"/>
    <property type="project" value="UniProtKB-UniRule"/>
</dbReference>
<dbReference type="GO" id="GO:0046933">
    <property type="term" value="F:proton-transporting ATP synthase activity, rotational mechanism"/>
    <property type="evidence" value="ECO:0007669"/>
    <property type="project" value="UniProtKB-UniRule"/>
</dbReference>
<dbReference type="GO" id="GO:0042777">
    <property type="term" value="P:proton motive force-driven plasma membrane ATP synthesis"/>
    <property type="evidence" value="ECO:0007669"/>
    <property type="project" value="UniProtKB-UniRule"/>
</dbReference>
<dbReference type="CDD" id="cd18112">
    <property type="entry name" value="ATP-synt_V_A-type_beta_C"/>
    <property type="match status" value="1"/>
</dbReference>
<dbReference type="CDD" id="cd18118">
    <property type="entry name" value="ATP-synt_V_A-type_beta_N"/>
    <property type="match status" value="1"/>
</dbReference>
<dbReference type="CDD" id="cd01135">
    <property type="entry name" value="V_A-ATPase_B"/>
    <property type="match status" value="1"/>
</dbReference>
<dbReference type="Gene3D" id="3.40.50.12240">
    <property type="match status" value="1"/>
</dbReference>
<dbReference type="HAMAP" id="MF_00310">
    <property type="entry name" value="ATP_synth_B_arch"/>
    <property type="match status" value="1"/>
</dbReference>
<dbReference type="InterPro" id="IPR055190">
    <property type="entry name" value="ATP-synt_VA_C"/>
</dbReference>
<dbReference type="InterPro" id="IPR020003">
    <property type="entry name" value="ATPase_a/bsu_AS"/>
</dbReference>
<dbReference type="InterPro" id="IPR004100">
    <property type="entry name" value="ATPase_F1/V1/A1_a/bsu_N"/>
</dbReference>
<dbReference type="InterPro" id="IPR000194">
    <property type="entry name" value="ATPase_F1/V1/A1_a/bsu_nucl-bd"/>
</dbReference>
<dbReference type="InterPro" id="IPR027417">
    <property type="entry name" value="P-loop_NTPase"/>
</dbReference>
<dbReference type="InterPro" id="IPR022879">
    <property type="entry name" value="V-ATPase_su_B/beta"/>
</dbReference>
<dbReference type="NCBIfam" id="NF003235">
    <property type="entry name" value="PRK04196.1"/>
    <property type="match status" value="1"/>
</dbReference>
<dbReference type="PANTHER" id="PTHR43389">
    <property type="entry name" value="V-TYPE PROTON ATPASE SUBUNIT B"/>
    <property type="match status" value="1"/>
</dbReference>
<dbReference type="PANTHER" id="PTHR43389:SF4">
    <property type="entry name" value="V-TYPE PROTON ATPASE SUBUNIT B"/>
    <property type="match status" value="1"/>
</dbReference>
<dbReference type="Pfam" id="PF00006">
    <property type="entry name" value="ATP-synt_ab"/>
    <property type="match status" value="1"/>
</dbReference>
<dbReference type="Pfam" id="PF02874">
    <property type="entry name" value="ATP-synt_ab_N"/>
    <property type="match status" value="1"/>
</dbReference>
<dbReference type="Pfam" id="PF22919">
    <property type="entry name" value="ATP-synt_VA_C"/>
    <property type="match status" value="1"/>
</dbReference>
<dbReference type="PIRSF" id="PIRSF039114">
    <property type="entry name" value="V-ATPsynth_beta/V-ATPase_B"/>
    <property type="match status" value="1"/>
</dbReference>
<dbReference type="SUPFAM" id="SSF47917">
    <property type="entry name" value="C-terminal domain of alpha and beta subunits of F1 ATP synthase"/>
    <property type="match status" value="1"/>
</dbReference>
<dbReference type="SUPFAM" id="SSF52540">
    <property type="entry name" value="P-loop containing nucleoside triphosphate hydrolases"/>
    <property type="match status" value="1"/>
</dbReference>
<dbReference type="PROSITE" id="PS00152">
    <property type="entry name" value="ATPASE_ALPHA_BETA"/>
    <property type="match status" value="1"/>
</dbReference>
<comment type="function">
    <text evidence="1">Component of the A-type ATP synthase that produces ATP from ADP in the presence of a proton gradient across the membrane. The B chain is a regulatory subunit.</text>
</comment>
<comment type="subunit">
    <text evidence="1">Has multiple subunits with at least A(3), B(3), C, D, E, F, H, I and proteolipid K(x).</text>
</comment>
<comment type="subcellular location">
    <subcellularLocation>
        <location evidence="1">Cell membrane</location>
        <topology evidence="1">Peripheral membrane protein</topology>
    </subcellularLocation>
</comment>
<comment type="similarity">
    <text evidence="1">Belongs to the ATPase alpha/beta chains family.</text>
</comment>
<proteinExistence type="inferred from homology"/>
<organism>
    <name type="scientific">Halorubrum lacusprofundi (strain ATCC 49239 / DSM 5036 / JCM 8891 / ACAM 34)</name>
    <dbReference type="NCBI Taxonomy" id="416348"/>
    <lineage>
        <taxon>Archaea</taxon>
        <taxon>Methanobacteriati</taxon>
        <taxon>Methanobacteriota</taxon>
        <taxon>Stenosarchaea group</taxon>
        <taxon>Halobacteria</taxon>
        <taxon>Halobacteriales</taxon>
        <taxon>Haloferacaceae</taxon>
        <taxon>Halorubrum</taxon>
    </lineage>
</organism>
<keyword id="KW-0066">ATP synthesis</keyword>
<keyword id="KW-1003">Cell membrane</keyword>
<keyword id="KW-0375">Hydrogen ion transport</keyword>
<keyword id="KW-0406">Ion transport</keyword>
<keyword id="KW-0472">Membrane</keyword>
<keyword id="KW-1185">Reference proteome</keyword>
<keyword id="KW-0813">Transport</keyword>
<name>AATB_HALLT</name>
<reference key="1">
    <citation type="journal article" date="2016" name="Stand. Genomic Sci.">
        <title>Complete genome sequence of the Antarctic Halorubrum lacusprofundi type strain ACAM 34.</title>
        <authorList>
            <person name="Anderson I.J."/>
            <person name="DasSarma P."/>
            <person name="Lucas S."/>
            <person name="Copeland A."/>
            <person name="Lapidus A."/>
            <person name="Del Rio T.G."/>
            <person name="Tice H."/>
            <person name="Dalin E."/>
            <person name="Bruce D.C."/>
            <person name="Goodwin L."/>
            <person name="Pitluck S."/>
            <person name="Sims D."/>
            <person name="Brettin T.S."/>
            <person name="Detter J.C."/>
            <person name="Han C.S."/>
            <person name="Larimer F."/>
            <person name="Hauser L."/>
            <person name="Land M."/>
            <person name="Ivanova N."/>
            <person name="Richardson P."/>
            <person name="Cavicchioli R."/>
            <person name="DasSarma S."/>
            <person name="Woese C.R."/>
            <person name="Kyrpides N.C."/>
        </authorList>
    </citation>
    <scope>NUCLEOTIDE SEQUENCE [LARGE SCALE GENOMIC DNA]</scope>
    <source>
        <strain>ATCC 49239 / DSM 5036 / JCM 8891 / ACAM 34</strain>
    </source>
</reference>
<gene>
    <name evidence="1" type="primary">atpB</name>
    <name type="ordered locus">Hlac_0282</name>
</gene>
<protein>
    <recommendedName>
        <fullName evidence="1">A-type ATP synthase subunit B</fullName>
    </recommendedName>
</protein>
<sequence length="474" mass="52656">MKEYQTITEISGPLVYAEVDEAIGYDEIVEIETAQGETLRGQVLESSEGVVAIQVFEGTSGIDQNASVRFLGETMKMPVTEDLLGRVLDGSGRPIDDGPEIVPEERQDIVGAAINPYSREYPEEFIETGVSAIDGMNTLVRGQKLPIFSSSGQPHSQLAMQIARQASVPEEEEGGDDEEGSEFAVIFGAMGITAEEANEFMQDFERTGALERSVVFMNLADDPAVERTVTPRMVLTTAEYLAFEKDYHVLVILTDMTNYCEALREIGAAREEVPGRRGYPGYMYTDLAQLYERAGRIQGRDGSVTQIPILTMPGDDDTHPIPDLTGYITEGQIYVDPDLNSQGLQPPINVLPSLSRLMDDGIGEGLTREDHADVKDQMFAAYAEGEDLRDLVNIVGREALSELDNKYLDFADDFESEFVDQGFDQNRSIEETLEIGWDLLSMLPKDALNRIDEEFIEKYYREDDSDRQVVEAAD</sequence>
<feature type="chain" id="PRO_1000132888" description="A-type ATP synthase subunit B">
    <location>
        <begin position="1"/>
        <end position="474"/>
    </location>
</feature>